<reference evidence="4" key="1">
    <citation type="journal article" date="2006" name="Comp. Biochem. Physiol.">
        <title>Comparison of the partial proteomes of the venoms of Brazilian spiders of the genus Phoneutria.</title>
        <authorList>
            <person name="Richardson M."/>
            <person name="Pimenta A.M."/>
            <person name="Bemquerer M.P."/>
            <person name="Santoro M.M."/>
            <person name="Beirao P.S."/>
            <person name="Lima M.E."/>
            <person name="Figueiredo S.G."/>
            <person name="Bloch C. Jr."/>
            <person name="Vasconcelos E.A."/>
            <person name="Campos F.A."/>
            <person name="Gomes P.C."/>
            <person name="Cordeiro M.N."/>
        </authorList>
    </citation>
    <scope>PROTEIN SEQUENCE</scope>
    <scope>FUNCTION</scope>
    <scope>SUBCELLULAR LOCATION</scope>
    <scope>TISSUE SPECIFICITY</scope>
    <scope>MASS SPECTROMETRY</scope>
    <source>
        <tissue evidence="3">Venom</tissue>
    </source>
</reference>
<organism>
    <name type="scientific">Phoneutria nigriventer</name>
    <name type="common">Brazilian armed spider</name>
    <name type="synonym">Ctenus nigriventer</name>
    <dbReference type="NCBI Taxonomy" id="6918"/>
    <lineage>
        <taxon>Eukaryota</taxon>
        <taxon>Metazoa</taxon>
        <taxon>Ecdysozoa</taxon>
        <taxon>Arthropoda</taxon>
        <taxon>Chelicerata</taxon>
        <taxon>Arachnida</taxon>
        <taxon>Araneae</taxon>
        <taxon>Araneomorphae</taxon>
        <taxon>Entelegynae</taxon>
        <taxon>Lycosoidea</taxon>
        <taxon>Ctenidae</taxon>
        <taxon>Phoneutria</taxon>
    </lineage>
</organism>
<comment type="function">
    <text evidence="3">Protease. Hydrolyzes gelatin and succinyl casein.</text>
</comment>
<comment type="subcellular location">
    <subcellularLocation>
        <location evidence="3">Secreted</location>
    </subcellularLocation>
</comment>
<comment type="tissue specificity">
    <text evidence="3">Expressed by the venom gland.</text>
</comment>
<comment type="mass spectrometry" mass="22088.99" method="MALDI" evidence="3"/>
<comment type="similarity">
    <text evidence="2">Belongs to the peptidase S1 family.</text>
</comment>
<name>PN47_PHONI</name>
<sequence length="245" mass="26776">IVYGTVTTPGKYPWMVSIHERVKDVMKQACGGAILNENWIVTAAHCFDQPIILKDYEVYVGIVSWLHKNAPTVQKFQLSKIIIHDKYVKDGFANDIALIKTATPIDIKGSKYGVNGICFPSGATDPSGEATVIGWGMIRGGGPISAELRQVTLPLVPWQKCKQIYGHPDSEFEYIQVVPSMLCAGGNGKDACQFDSGGPLFQYDKKGVATLIGTVANGADCAYAHYPGMYMKVSAFRSWMDKVMT</sequence>
<keyword id="KW-0903">Direct protein sequencing</keyword>
<keyword id="KW-1015">Disulfide bond</keyword>
<keyword id="KW-0378">Hydrolase</keyword>
<keyword id="KW-0645">Protease</keyword>
<keyword id="KW-0964">Secreted</keyword>
<keyword id="KW-0720">Serine protease</keyword>
<protein>
    <recommendedName>
        <fullName>U21-ctenitoxin-Pn1a</fullName>
        <shortName>U21-CNTX-Pn1a</shortName>
        <ecNumber>3.4.21.-</ecNumber>
    </recommendedName>
    <alternativeName>
        <fullName>Proteinase PN47</fullName>
    </alternativeName>
</protein>
<feature type="chain" id="PRO_0000058476" description="U21-ctenitoxin-Pn1a">
    <location>
        <begin position="1"/>
        <end position="245"/>
    </location>
</feature>
<feature type="domain" description="Peptidase S1" evidence="2">
    <location>
        <begin position="1"/>
        <end position="245"/>
    </location>
</feature>
<feature type="active site" description="Charge relay system" evidence="1">
    <location>
        <position position="45"/>
    </location>
</feature>
<feature type="active site" description="Charge relay system" evidence="1">
    <location>
        <position position="95"/>
    </location>
</feature>
<feature type="active site" description="Charge relay system" evidence="1">
    <location>
        <position position="196"/>
    </location>
</feature>
<feature type="disulfide bond" evidence="2">
    <location>
        <begin position="30"/>
        <end position="46"/>
    </location>
</feature>
<feature type="disulfide bond" evidence="2">
    <location>
        <begin position="161"/>
        <end position="183"/>
    </location>
</feature>
<feature type="disulfide bond" evidence="2">
    <location>
        <begin position="192"/>
        <end position="221"/>
    </location>
</feature>
<dbReference type="EC" id="3.4.21.-"/>
<dbReference type="SMR" id="P84033"/>
<dbReference type="ArachnoServer" id="AS000011">
    <property type="toxin name" value="U21-ctenitoxin-Pn1a (N-terminal fragment)"/>
</dbReference>
<dbReference type="GO" id="GO:0005576">
    <property type="term" value="C:extracellular region"/>
    <property type="evidence" value="ECO:0007669"/>
    <property type="project" value="UniProtKB-SubCell"/>
</dbReference>
<dbReference type="GO" id="GO:0004252">
    <property type="term" value="F:serine-type endopeptidase activity"/>
    <property type="evidence" value="ECO:0007669"/>
    <property type="project" value="InterPro"/>
</dbReference>
<dbReference type="GO" id="GO:0006508">
    <property type="term" value="P:proteolysis"/>
    <property type="evidence" value="ECO:0007669"/>
    <property type="project" value="UniProtKB-KW"/>
</dbReference>
<dbReference type="CDD" id="cd00190">
    <property type="entry name" value="Tryp_SPc"/>
    <property type="match status" value="1"/>
</dbReference>
<dbReference type="FunFam" id="2.40.10.10:FF:000060">
    <property type="entry name" value="Acrosin"/>
    <property type="match status" value="1"/>
</dbReference>
<dbReference type="Gene3D" id="2.40.10.10">
    <property type="entry name" value="Trypsin-like serine proteases"/>
    <property type="match status" value="1"/>
</dbReference>
<dbReference type="InterPro" id="IPR009003">
    <property type="entry name" value="Peptidase_S1_PA"/>
</dbReference>
<dbReference type="InterPro" id="IPR043504">
    <property type="entry name" value="Peptidase_S1_PA_chymotrypsin"/>
</dbReference>
<dbReference type="InterPro" id="IPR001314">
    <property type="entry name" value="Peptidase_S1A"/>
</dbReference>
<dbReference type="InterPro" id="IPR001254">
    <property type="entry name" value="Trypsin_dom"/>
</dbReference>
<dbReference type="InterPro" id="IPR018114">
    <property type="entry name" value="TRYPSIN_HIS"/>
</dbReference>
<dbReference type="PANTHER" id="PTHR24253:SF153">
    <property type="entry name" value="SERINE PROTEASE HEPSIN"/>
    <property type="match status" value="1"/>
</dbReference>
<dbReference type="PANTHER" id="PTHR24253">
    <property type="entry name" value="TRANSMEMBRANE PROTEASE SERINE"/>
    <property type="match status" value="1"/>
</dbReference>
<dbReference type="Pfam" id="PF00089">
    <property type="entry name" value="Trypsin"/>
    <property type="match status" value="1"/>
</dbReference>
<dbReference type="PRINTS" id="PR00722">
    <property type="entry name" value="CHYMOTRYPSIN"/>
</dbReference>
<dbReference type="SMART" id="SM00020">
    <property type="entry name" value="Tryp_SPc"/>
    <property type="match status" value="1"/>
</dbReference>
<dbReference type="SUPFAM" id="SSF50494">
    <property type="entry name" value="Trypsin-like serine proteases"/>
    <property type="match status" value="1"/>
</dbReference>
<dbReference type="PROSITE" id="PS50240">
    <property type="entry name" value="TRYPSIN_DOM"/>
    <property type="match status" value="1"/>
</dbReference>
<dbReference type="PROSITE" id="PS00134">
    <property type="entry name" value="TRYPSIN_HIS"/>
    <property type="match status" value="1"/>
</dbReference>
<accession>P84033</accession>
<proteinExistence type="evidence at protein level"/>
<evidence type="ECO:0000255" key="1"/>
<evidence type="ECO:0000255" key="2">
    <source>
        <dbReference type="PROSITE-ProRule" id="PRU00274"/>
    </source>
</evidence>
<evidence type="ECO:0000269" key="3">
    <source>
    </source>
</evidence>
<evidence type="ECO:0000305" key="4"/>